<organism>
    <name type="scientific">Chelativorans sp. (strain BNC1)</name>
    <dbReference type="NCBI Taxonomy" id="266779"/>
    <lineage>
        <taxon>Bacteria</taxon>
        <taxon>Pseudomonadati</taxon>
        <taxon>Pseudomonadota</taxon>
        <taxon>Alphaproteobacteria</taxon>
        <taxon>Hyphomicrobiales</taxon>
        <taxon>Phyllobacteriaceae</taxon>
        <taxon>Chelativorans</taxon>
    </lineage>
</organism>
<gene>
    <name evidence="1" type="primary">ureD</name>
    <name type="ordered locus">Meso_2680</name>
</gene>
<accession>Q11EW8</accession>
<keyword id="KW-0143">Chaperone</keyword>
<keyword id="KW-0963">Cytoplasm</keyword>
<keyword id="KW-0996">Nickel insertion</keyword>
<name>URED_CHESB</name>
<protein>
    <recommendedName>
        <fullName evidence="1">Urease accessory protein UreD</fullName>
    </recommendedName>
</protein>
<dbReference type="EMBL" id="CP000390">
    <property type="protein sequence ID" value="ABG64057.1"/>
    <property type="status" value="ALT_INIT"/>
    <property type="molecule type" value="Genomic_DNA"/>
</dbReference>
<dbReference type="SMR" id="Q11EW8"/>
<dbReference type="STRING" id="266779.Meso_2680"/>
<dbReference type="KEGG" id="mes:Meso_2680"/>
<dbReference type="eggNOG" id="COG0829">
    <property type="taxonomic scope" value="Bacteria"/>
</dbReference>
<dbReference type="HOGENOM" id="CLU_056339_2_0_5"/>
<dbReference type="GO" id="GO:0005737">
    <property type="term" value="C:cytoplasm"/>
    <property type="evidence" value="ECO:0007669"/>
    <property type="project" value="UniProtKB-SubCell"/>
</dbReference>
<dbReference type="GO" id="GO:0016151">
    <property type="term" value="F:nickel cation binding"/>
    <property type="evidence" value="ECO:0007669"/>
    <property type="project" value="UniProtKB-UniRule"/>
</dbReference>
<dbReference type="HAMAP" id="MF_01384">
    <property type="entry name" value="UreD"/>
    <property type="match status" value="1"/>
</dbReference>
<dbReference type="InterPro" id="IPR002669">
    <property type="entry name" value="UreD"/>
</dbReference>
<dbReference type="PANTHER" id="PTHR33643">
    <property type="entry name" value="UREASE ACCESSORY PROTEIN D"/>
    <property type="match status" value="1"/>
</dbReference>
<dbReference type="PANTHER" id="PTHR33643:SF1">
    <property type="entry name" value="UREASE ACCESSORY PROTEIN D"/>
    <property type="match status" value="1"/>
</dbReference>
<dbReference type="Pfam" id="PF01774">
    <property type="entry name" value="UreD"/>
    <property type="match status" value="1"/>
</dbReference>
<sequence>MRQTAQEDASPAPMQRAHGTGRIEAKLREGRTRLERLYQEGCCKIRLPRSHGGAMEAVLINTSGGLTGGDRIDWKADALAGSKLVVTTQACERIYRSTGDDARVSTALRVGPGAHVDWLPQETILFEGSRLHRSLRVDLEDNATFTAVEAVLLGREAMGETARKAHLRDRWRIYRDGKLVHAEETRLAGEEFEREGISLLAGNNAFATILAIGPDAEEKLTALRSILGPSVHAAASAIGERLVLRVVAPSGLMLRRTIIPAIALLSGAGALPRLWSI</sequence>
<reference key="1">
    <citation type="submission" date="2006-06" db="EMBL/GenBank/DDBJ databases">
        <title>Complete sequence of chromosome of Mesorhizobium sp. BNC1.</title>
        <authorList>
            <consortium name="US DOE Joint Genome Institute"/>
            <person name="Copeland A."/>
            <person name="Lucas S."/>
            <person name="Lapidus A."/>
            <person name="Barry K."/>
            <person name="Detter J.C."/>
            <person name="Glavina del Rio T."/>
            <person name="Hammon N."/>
            <person name="Israni S."/>
            <person name="Dalin E."/>
            <person name="Tice H."/>
            <person name="Pitluck S."/>
            <person name="Chertkov O."/>
            <person name="Brettin T."/>
            <person name="Bruce D."/>
            <person name="Han C."/>
            <person name="Tapia R."/>
            <person name="Gilna P."/>
            <person name="Schmutz J."/>
            <person name="Larimer F."/>
            <person name="Land M."/>
            <person name="Hauser L."/>
            <person name="Kyrpides N."/>
            <person name="Mikhailova N."/>
            <person name="Richardson P."/>
        </authorList>
    </citation>
    <scope>NUCLEOTIDE SEQUENCE [LARGE SCALE GENOMIC DNA]</scope>
    <source>
        <strain>BNC1</strain>
    </source>
</reference>
<proteinExistence type="inferred from homology"/>
<evidence type="ECO:0000255" key="1">
    <source>
        <dbReference type="HAMAP-Rule" id="MF_01384"/>
    </source>
</evidence>
<evidence type="ECO:0000256" key="2">
    <source>
        <dbReference type="SAM" id="MobiDB-lite"/>
    </source>
</evidence>
<evidence type="ECO:0000305" key="3"/>
<feature type="chain" id="PRO_0000340462" description="Urease accessory protein UreD">
    <location>
        <begin position="1"/>
        <end position="277"/>
    </location>
</feature>
<feature type="region of interest" description="Disordered" evidence="2">
    <location>
        <begin position="1"/>
        <end position="20"/>
    </location>
</feature>
<comment type="function">
    <text evidence="1">Required for maturation of urease via the functional incorporation of the urease nickel metallocenter.</text>
</comment>
<comment type="subunit">
    <text evidence="1">UreD, UreF and UreG form a complex that acts as a GTP-hydrolysis-dependent molecular chaperone, activating the urease apoprotein by helping to assemble the nickel containing metallocenter of UreC. The UreE protein probably delivers the nickel.</text>
</comment>
<comment type="subcellular location">
    <subcellularLocation>
        <location evidence="1">Cytoplasm</location>
    </subcellularLocation>
</comment>
<comment type="similarity">
    <text evidence="1">Belongs to the UreD family.</text>
</comment>
<comment type="sequence caution" evidence="3">
    <conflict type="erroneous initiation">
        <sequence resource="EMBL-CDS" id="ABG64057"/>
    </conflict>
</comment>